<feature type="chain" id="PRO_0000329739" description="Polyribonucleotide nucleotidyltransferase">
    <location>
        <begin position="1"/>
        <end position="701"/>
    </location>
</feature>
<feature type="domain" description="KH" evidence="1">
    <location>
        <begin position="552"/>
        <end position="611"/>
    </location>
</feature>
<feature type="domain" description="S1 motif" evidence="1">
    <location>
        <begin position="621"/>
        <end position="689"/>
    </location>
</feature>
<feature type="binding site" evidence="1">
    <location>
        <position position="485"/>
    </location>
    <ligand>
        <name>Mg(2+)</name>
        <dbReference type="ChEBI" id="CHEBI:18420"/>
    </ligand>
</feature>
<feature type="binding site" evidence="1">
    <location>
        <position position="491"/>
    </location>
    <ligand>
        <name>Mg(2+)</name>
        <dbReference type="ChEBI" id="CHEBI:18420"/>
    </ligand>
</feature>
<comment type="function">
    <text evidence="1">Involved in mRNA degradation. Catalyzes the phosphorolysis of single-stranded polyribonucleotides processively in the 3'- to 5'-direction.</text>
</comment>
<comment type="catalytic activity">
    <reaction evidence="1">
        <text>RNA(n+1) + phosphate = RNA(n) + a ribonucleoside 5'-diphosphate</text>
        <dbReference type="Rhea" id="RHEA:22096"/>
        <dbReference type="Rhea" id="RHEA-COMP:14527"/>
        <dbReference type="Rhea" id="RHEA-COMP:17342"/>
        <dbReference type="ChEBI" id="CHEBI:43474"/>
        <dbReference type="ChEBI" id="CHEBI:57930"/>
        <dbReference type="ChEBI" id="CHEBI:140395"/>
        <dbReference type="EC" id="2.7.7.8"/>
    </reaction>
</comment>
<comment type="cofactor">
    <cofactor evidence="1">
        <name>Mg(2+)</name>
        <dbReference type="ChEBI" id="CHEBI:18420"/>
    </cofactor>
</comment>
<comment type="subcellular location">
    <subcellularLocation>
        <location evidence="1">Cytoplasm</location>
    </subcellularLocation>
</comment>
<comment type="similarity">
    <text evidence="1">Belongs to the polyribonucleotide nucleotidyltransferase family.</text>
</comment>
<accession>Q2Y5X9</accession>
<gene>
    <name evidence="1" type="primary">pnp</name>
    <name type="ordered locus">Nmul_A2553</name>
</gene>
<dbReference type="EC" id="2.7.7.8" evidence="1"/>
<dbReference type="EMBL" id="CP000103">
    <property type="protein sequence ID" value="ABB75842.1"/>
    <property type="molecule type" value="Genomic_DNA"/>
</dbReference>
<dbReference type="RefSeq" id="WP_011381841.1">
    <property type="nucleotide sequence ID" value="NC_007614.1"/>
</dbReference>
<dbReference type="SMR" id="Q2Y5X9"/>
<dbReference type="STRING" id="323848.Nmul_A2553"/>
<dbReference type="KEGG" id="nmu:Nmul_A2553"/>
<dbReference type="eggNOG" id="COG1185">
    <property type="taxonomic scope" value="Bacteria"/>
</dbReference>
<dbReference type="HOGENOM" id="CLU_004217_2_2_4"/>
<dbReference type="OrthoDB" id="9804305at2"/>
<dbReference type="Proteomes" id="UP000002718">
    <property type="component" value="Chromosome"/>
</dbReference>
<dbReference type="GO" id="GO:0005829">
    <property type="term" value="C:cytosol"/>
    <property type="evidence" value="ECO:0007669"/>
    <property type="project" value="TreeGrafter"/>
</dbReference>
<dbReference type="GO" id="GO:0000175">
    <property type="term" value="F:3'-5'-RNA exonuclease activity"/>
    <property type="evidence" value="ECO:0007669"/>
    <property type="project" value="TreeGrafter"/>
</dbReference>
<dbReference type="GO" id="GO:0000287">
    <property type="term" value="F:magnesium ion binding"/>
    <property type="evidence" value="ECO:0007669"/>
    <property type="project" value="UniProtKB-UniRule"/>
</dbReference>
<dbReference type="GO" id="GO:0004654">
    <property type="term" value="F:polyribonucleotide nucleotidyltransferase activity"/>
    <property type="evidence" value="ECO:0007669"/>
    <property type="project" value="UniProtKB-UniRule"/>
</dbReference>
<dbReference type="GO" id="GO:0003723">
    <property type="term" value="F:RNA binding"/>
    <property type="evidence" value="ECO:0007669"/>
    <property type="project" value="UniProtKB-UniRule"/>
</dbReference>
<dbReference type="GO" id="GO:0006402">
    <property type="term" value="P:mRNA catabolic process"/>
    <property type="evidence" value="ECO:0007669"/>
    <property type="project" value="UniProtKB-UniRule"/>
</dbReference>
<dbReference type="GO" id="GO:0006396">
    <property type="term" value="P:RNA processing"/>
    <property type="evidence" value="ECO:0007669"/>
    <property type="project" value="InterPro"/>
</dbReference>
<dbReference type="CDD" id="cd02393">
    <property type="entry name" value="KH-I_PNPase"/>
    <property type="match status" value="1"/>
</dbReference>
<dbReference type="CDD" id="cd11363">
    <property type="entry name" value="RNase_PH_PNPase_1"/>
    <property type="match status" value="1"/>
</dbReference>
<dbReference type="CDD" id="cd11364">
    <property type="entry name" value="RNase_PH_PNPase_2"/>
    <property type="match status" value="1"/>
</dbReference>
<dbReference type="CDD" id="cd04472">
    <property type="entry name" value="S1_PNPase"/>
    <property type="match status" value="1"/>
</dbReference>
<dbReference type="FunFam" id="3.30.1370.10:FF:000001">
    <property type="entry name" value="Polyribonucleotide nucleotidyltransferase"/>
    <property type="match status" value="1"/>
</dbReference>
<dbReference type="FunFam" id="3.30.230.70:FF:000001">
    <property type="entry name" value="Polyribonucleotide nucleotidyltransferase"/>
    <property type="match status" value="1"/>
</dbReference>
<dbReference type="FunFam" id="3.30.230.70:FF:000002">
    <property type="entry name" value="Polyribonucleotide nucleotidyltransferase"/>
    <property type="match status" value="1"/>
</dbReference>
<dbReference type="FunFam" id="2.40.50.140:FF:000189">
    <property type="entry name" value="Polyribonucleotide nucleotidyltransferase, putative"/>
    <property type="match status" value="1"/>
</dbReference>
<dbReference type="Gene3D" id="3.30.230.70">
    <property type="entry name" value="GHMP Kinase, N-terminal domain"/>
    <property type="match status" value="2"/>
</dbReference>
<dbReference type="Gene3D" id="3.30.1370.10">
    <property type="entry name" value="K Homology domain, type 1"/>
    <property type="match status" value="1"/>
</dbReference>
<dbReference type="Gene3D" id="2.40.50.140">
    <property type="entry name" value="Nucleic acid-binding proteins"/>
    <property type="match status" value="1"/>
</dbReference>
<dbReference type="HAMAP" id="MF_01595">
    <property type="entry name" value="PNPase"/>
    <property type="match status" value="1"/>
</dbReference>
<dbReference type="InterPro" id="IPR001247">
    <property type="entry name" value="ExoRNase_PH_dom1"/>
</dbReference>
<dbReference type="InterPro" id="IPR015847">
    <property type="entry name" value="ExoRNase_PH_dom2"/>
</dbReference>
<dbReference type="InterPro" id="IPR036345">
    <property type="entry name" value="ExoRNase_PH_dom2_sf"/>
</dbReference>
<dbReference type="InterPro" id="IPR004087">
    <property type="entry name" value="KH_dom"/>
</dbReference>
<dbReference type="InterPro" id="IPR004088">
    <property type="entry name" value="KH_dom_type_1"/>
</dbReference>
<dbReference type="InterPro" id="IPR036612">
    <property type="entry name" value="KH_dom_type_1_sf"/>
</dbReference>
<dbReference type="InterPro" id="IPR012340">
    <property type="entry name" value="NA-bd_OB-fold"/>
</dbReference>
<dbReference type="InterPro" id="IPR012162">
    <property type="entry name" value="PNPase"/>
</dbReference>
<dbReference type="InterPro" id="IPR027408">
    <property type="entry name" value="PNPase/RNase_PH_dom_sf"/>
</dbReference>
<dbReference type="InterPro" id="IPR015848">
    <property type="entry name" value="PNPase_PH_RNA-bd_bac/org-type"/>
</dbReference>
<dbReference type="InterPro" id="IPR020568">
    <property type="entry name" value="Ribosomal_Su5_D2-typ_SF"/>
</dbReference>
<dbReference type="InterPro" id="IPR003029">
    <property type="entry name" value="S1_domain"/>
</dbReference>
<dbReference type="NCBIfam" id="TIGR03591">
    <property type="entry name" value="polynuc_phos"/>
    <property type="match status" value="1"/>
</dbReference>
<dbReference type="NCBIfam" id="NF008805">
    <property type="entry name" value="PRK11824.1"/>
    <property type="match status" value="1"/>
</dbReference>
<dbReference type="PANTHER" id="PTHR11252">
    <property type="entry name" value="POLYRIBONUCLEOTIDE NUCLEOTIDYLTRANSFERASE"/>
    <property type="match status" value="1"/>
</dbReference>
<dbReference type="PANTHER" id="PTHR11252:SF0">
    <property type="entry name" value="POLYRIBONUCLEOTIDE NUCLEOTIDYLTRANSFERASE 1, MITOCHONDRIAL"/>
    <property type="match status" value="1"/>
</dbReference>
<dbReference type="Pfam" id="PF00013">
    <property type="entry name" value="KH_1"/>
    <property type="match status" value="1"/>
</dbReference>
<dbReference type="Pfam" id="PF03726">
    <property type="entry name" value="PNPase"/>
    <property type="match status" value="1"/>
</dbReference>
<dbReference type="Pfam" id="PF01138">
    <property type="entry name" value="RNase_PH"/>
    <property type="match status" value="2"/>
</dbReference>
<dbReference type="Pfam" id="PF03725">
    <property type="entry name" value="RNase_PH_C"/>
    <property type="match status" value="2"/>
</dbReference>
<dbReference type="Pfam" id="PF00575">
    <property type="entry name" value="S1"/>
    <property type="match status" value="1"/>
</dbReference>
<dbReference type="PIRSF" id="PIRSF005499">
    <property type="entry name" value="PNPase"/>
    <property type="match status" value="1"/>
</dbReference>
<dbReference type="SMART" id="SM00322">
    <property type="entry name" value="KH"/>
    <property type="match status" value="1"/>
</dbReference>
<dbReference type="SMART" id="SM00316">
    <property type="entry name" value="S1"/>
    <property type="match status" value="1"/>
</dbReference>
<dbReference type="SUPFAM" id="SSF54791">
    <property type="entry name" value="Eukaryotic type KH-domain (KH-domain type I)"/>
    <property type="match status" value="1"/>
</dbReference>
<dbReference type="SUPFAM" id="SSF50249">
    <property type="entry name" value="Nucleic acid-binding proteins"/>
    <property type="match status" value="1"/>
</dbReference>
<dbReference type="SUPFAM" id="SSF55666">
    <property type="entry name" value="Ribonuclease PH domain 2-like"/>
    <property type="match status" value="2"/>
</dbReference>
<dbReference type="SUPFAM" id="SSF54211">
    <property type="entry name" value="Ribosomal protein S5 domain 2-like"/>
    <property type="match status" value="2"/>
</dbReference>
<dbReference type="PROSITE" id="PS50084">
    <property type="entry name" value="KH_TYPE_1"/>
    <property type="match status" value="1"/>
</dbReference>
<dbReference type="PROSITE" id="PS50126">
    <property type="entry name" value="S1"/>
    <property type="match status" value="1"/>
</dbReference>
<name>PNP_NITMU</name>
<reference key="1">
    <citation type="submission" date="2005-08" db="EMBL/GenBank/DDBJ databases">
        <title>Complete sequence of chromosome 1 of Nitrosospira multiformis ATCC 25196.</title>
        <authorList>
            <person name="Copeland A."/>
            <person name="Lucas S."/>
            <person name="Lapidus A."/>
            <person name="Barry K."/>
            <person name="Detter J.C."/>
            <person name="Glavina T."/>
            <person name="Hammon N."/>
            <person name="Israni S."/>
            <person name="Pitluck S."/>
            <person name="Chain P."/>
            <person name="Malfatti S."/>
            <person name="Shin M."/>
            <person name="Vergez L."/>
            <person name="Schmutz J."/>
            <person name="Larimer F."/>
            <person name="Land M."/>
            <person name="Hauser L."/>
            <person name="Kyrpides N."/>
            <person name="Lykidis A."/>
            <person name="Richardson P."/>
        </authorList>
    </citation>
    <scope>NUCLEOTIDE SEQUENCE [LARGE SCALE GENOMIC DNA]</scope>
    <source>
        <strain>ATCC 25196 / NCIMB 11849 / C 71</strain>
    </source>
</reference>
<protein>
    <recommendedName>
        <fullName evidence="1">Polyribonucleotide nucleotidyltransferase</fullName>
        <ecNumber evidence="1">2.7.7.8</ecNumber>
    </recommendedName>
    <alternativeName>
        <fullName evidence="1">Polynucleotide phosphorylase</fullName>
        <shortName evidence="1">PNPase</shortName>
    </alternativeName>
</protein>
<proteinExistence type="inferred from homology"/>
<evidence type="ECO:0000255" key="1">
    <source>
        <dbReference type="HAMAP-Rule" id="MF_01595"/>
    </source>
</evidence>
<keyword id="KW-0963">Cytoplasm</keyword>
<keyword id="KW-0460">Magnesium</keyword>
<keyword id="KW-0479">Metal-binding</keyword>
<keyword id="KW-0548">Nucleotidyltransferase</keyword>
<keyword id="KW-1185">Reference proteome</keyword>
<keyword id="KW-0694">RNA-binding</keyword>
<keyword id="KW-0808">Transferase</keyword>
<sequence>MKIKKSVTYGSHQLTFETGEIARQAHAAIMVSMGDTVVLVTVVGAKSAKQGQDFFPLTVDYQERSYAAGRIPGSFFKREGRPSEKEILTSRLIDRPIRPLFPENFYNEVQVVATVLSSDNEVDADIPAMLGASAALVLSGIPFNGPIGAARIGYINGEYVLNPDTSALKQTQLNLVVAGTRQAVLMVESDAMELSEDVMLGAIVYGHQQMQVAIDAINELADEAGVTAWDWEPPARDPALAVKIAELAENDLRAAFRQKQKQVRSETIDNIWTRVFTELGVEDGEGPDAQAVKEACFALESRIVRSQILDGEPRIDGRDTRTVRPITIRTGLLPRTHGSALFTRGETQALVVATLGTGRDEQKIDALQGDYSERFMLHYNMPPYATGETGRVGTPKRREIGHGRLAKRALVAVLPSPEEFGYSLRVVSEITESNGSSSMASVCGGCLALMDAGVPLKGHVAGIAMGLIKEGNRFAVLTDILGDEDHLGDMDFKVAGTENGITALQMDIKIQGITKEILHAALVQAREGRMHILAIMRQVLPARREDISEHAPRIIKIRINPEKIRDVIGKGGAVIRALTEETGTTIDITDDGTVMIACVNAEGGELAKKRIEDITAEVEVGRVYDGTVLKLLDFGAIVSVLPGKDGLLHISQIANERVNNVGDHLKEGQVVRVKVLEADDKGRLRLSMKAVATDVADNAAT</sequence>
<organism>
    <name type="scientific">Nitrosospira multiformis (strain ATCC 25196 / NCIMB 11849 / C 71)</name>
    <dbReference type="NCBI Taxonomy" id="323848"/>
    <lineage>
        <taxon>Bacteria</taxon>
        <taxon>Pseudomonadati</taxon>
        <taxon>Pseudomonadota</taxon>
        <taxon>Betaproteobacteria</taxon>
        <taxon>Nitrosomonadales</taxon>
        <taxon>Nitrosomonadaceae</taxon>
        <taxon>Nitrosospira</taxon>
    </lineage>
</organism>